<accession>P83134</accession>
<accession>Q90Y76</accession>
<proteinExistence type="evidence at protein level"/>
<feature type="chain" id="PRO_0000052541" description="Hemoglobin D subunit alpha">
    <location>
        <begin position="1"/>
        <end position="141"/>
    </location>
</feature>
<feature type="domain" description="Globin" evidence="2">
    <location>
        <begin position="1"/>
        <end position="141"/>
    </location>
</feature>
<feature type="binding site" evidence="2">
    <location>
        <position position="58"/>
    </location>
    <ligand>
        <name>O2</name>
        <dbReference type="ChEBI" id="CHEBI:15379"/>
    </ligand>
</feature>
<feature type="binding site" description="proximal binding residue" evidence="2">
    <location>
        <position position="87"/>
    </location>
    <ligand>
        <name>heme b</name>
        <dbReference type="ChEBI" id="CHEBI:60344"/>
    </ligand>
    <ligandPart>
        <name>Fe</name>
        <dbReference type="ChEBI" id="CHEBI:18248"/>
    </ligandPart>
</feature>
<feature type="helix" evidence="4">
    <location>
        <begin position="4"/>
        <end position="17"/>
    </location>
</feature>
<feature type="helix" evidence="4">
    <location>
        <begin position="18"/>
        <end position="20"/>
    </location>
</feature>
<feature type="helix" evidence="4">
    <location>
        <begin position="21"/>
        <end position="35"/>
    </location>
</feature>
<feature type="helix" evidence="4">
    <location>
        <begin position="37"/>
        <end position="42"/>
    </location>
</feature>
<feature type="helix" evidence="4">
    <location>
        <begin position="53"/>
        <end position="71"/>
    </location>
</feature>
<feature type="turn" evidence="4">
    <location>
        <begin position="72"/>
        <end position="74"/>
    </location>
</feature>
<feature type="helix" evidence="4">
    <location>
        <begin position="76"/>
        <end position="79"/>
    </location>
</feature>
<feature type="helix" evidence="4">
    <location>
        <begin position="81"/>
        <end position="89"/>
    </location>
</feature>
<feature type="helix" evidence="4">
    <location>
        <begin position="95"/>
        <end position="113"/>
    </location>
</feature>
<feature type="helix" evidence="4">
    <location>
        <begin position="114"/>
        <end position="116"/>
    </location>
</feature>
<feature type="helix" evidence="4">
    <location>
        <begin position="119"/>
        <end position="136"/>
    </location>
</feature>
<feature type="helix" evidence="4">
    <location>
        <begin position="138"/>
        <end position="140"/>
    </location>
</feature>
<organism evidence="3">
    <name type="scientific">Aldabrachelys gigantea</name>
    <name type="common">Aldabra giant tortoise</name>
    <name type="synonym">Geochelone gigantea</name>
    <dbReference type="NCBI Taxonomy" id="167804"/>
    <lineage>
        <taxon>Eukaryota</taxon>
        <taxon>Metazoa</taxon>
        <taxon>Chordata</taxon>
        <taxon>Craniata</taxon>
        <taxon>Vertebrata</taxon>
        <taxon>Euteleostomi</taxon>
        <taxon>Archelosauria</taxon>
        <taxon>Testudinata</taxon>
        <taxon>Testudines</taxon>
        <taxon>Cryptodira</taxon>
        <taxon>Durocryptodira</taxon>
        <taxon>Testudinoidea</taxon>
        <taxon>Testudinidae</taxon>
        <taxon>Aldabrachelys</taxon>
    </lineage>
</organism>
<evidence type="ECO:0000250" key="1">
    <source>
        <dbReference type="UniProtKB" id="P07417"/>
    </source>
</evidence>
<evidence type="ECO:0000255" key="2">
    <source>
        <dbReference type="PROSITE-ProRule" id="PRU00238"/>
    </source>
</evidence>
<evidence type="ECO:0000305" key="3"/>
<evidence type="ECO:0007829" key="4">
    <source>
        <dbReference type="PDB" id="1WMU"/>
    </source>
</evidence>
<comment type="function">
    <text evidence="1">Involved in oxygen transport from the lung to the various peripheral tissues.</text>
</comment>
<comment type="subunit">
    <text evidence="3">Tetramer of two alpha chains and two beta chains.</text>
</comment>
<comment type="tissue specificity">
    <text evidence="3">Red blood cells.</text>
</comment>
<comment type="miscellaneous">
    <text evidence="3">Hemoglobin A is the major, and hemoglobin D the minor hemoglobin of this species.</text>
</comment>
<comment type="similarity">
    <text evidence="2">Belongs to the globin family.</text>
</comment>
<protein>
    <recommendedName>
        <fullName>Hemoglobin D subunit alpha</fullName>
    </recommendedName>
    <alternativeName>
        <fullName>Hemoglobin D alpha chain</fullName>
    </alternativeName>
</protein>
<keyword id="KW-0002">3D-structure</keyword>
<keyword id="KW-0903">Direct protein sequencing</keyword>
<keyword id="KW-0349">Heme</keyword>
<keyword id="KW-0408">Iron</keyword>
<keyword id="KW-0479">Metal-binding</keyword>
<keyword id="KW-0561">Oxygen transport</keyword>
<keyword id="KW-0813">Transport</keyword>
<sequence>MLTEDDKQLIQHVWEKVLEHQEDFGAEALERMFIVYPSTKTYFPHFDLHHDSEQIRHHGKKVVGALGDAVKHIDNLSATLSELSNLHAYNLRVDPVNFKLLSHCFQVVLGAHLGREYTPQVQVAYDKFLAAVSAVLAEKYR</sequence>
<name>HBAD_ALDGI</name>
<dbReference type="EMBL" id="AB072353">
    <property type="protein sequence ID" value="BAB68554.1"/>
    <property type="molecule type" value="Genomic_DNA"/>
</dbReference>
<dbReference type="PDB" id="1V75">
    <property type="method" value="X-ray"/>
    <property type="resolution" value="2.02 A"/>
    <property type="chains" value="A=1-141"/>
</dbReference>
<dbReference type="PDB" id="1WMU">
    <property type="method" value="X-ray"/>
    <property type="resolution" value="1.65 A"/>
    <property type="chains" value="A=1-141"/>
</dbReference>
<dbReference type="PDB" id="2Z6N">
    <property type="method" value="X-ray"/>
    <property type="resolution" value="1.86 A"/>
    <property type="chains" value="A=1-141"/>
</dbReference>
<dbReference type="PDBsum" id="1V75"/>
<dbReference type="PDBsum" id="1WMU"/>
<dbReference type="PDBsum" id="2Z6N"/>
<dbReference type="SMR" id="P83134"/>
<dbReference type="EvolutionaryTrace" id="P83134"/>
<dbReference type="GO" id="GO:0072562">
    <property type="term" value="C:blood microparticle"/>
    <property type="evidence" value="ECO:0007669"/>
    <property type="project" value="TreeGrafter"/>
</dbReference>
<dbReference type="GO" id="GO:0031838">
    <property type="term" value="C:haptoglobin-hemoglobin complex"/>
    <property type="evidence" value="ECO:0007669"/>
    <property type="project" value="TreeGrafter"/>
</dbReference>
<dbReference type="GO" id="GO:0005833">
    <property type="term" value="C:hemoglobin complex"/>
    <property type="evidence" value="ECO:0007669"/>
    <property type="project" value="InterPro"/>
</dbReference>
<dbReference type="GO" id="GO:0031720">
    <property type="term" value="F:haptoglobin binding"/>
    <property type="evidence" value="ECO:0007669"/>
    <property type="project" value="TreeGrafter"/>
</dbReference>
<dbReference type="GO" id="GO:0020037">
    <property type="term" value="F:heme binding"/>
    <property type="evidence" value="ECO:0007669"/>
    <property type="project" value="InterPro"/>
</dbReference>
<dbReference type="GO" id="GO:0046872">
    <property type="term" value="F:metal ion binding"/>
    <property type="evidence" value="ECO:0007669"/>
    <property type="project" value="UniProtKB-KW"/>
</dbReference>
<dbReference type="GO" id="GO:0043177">
    <property type="term" value="F:organic acid binding"/>
    <property type="evidence" value="ECO:0007669"/>
    <property type="project" value="TreeGrafter"/>
</dbReference>
<dbReference type="GO" id="GO:0019825">
    <property type="term" value="F:oxygen binding"/>
    <property type="evidence" value="ECO:0007669"/>
    <property type="project" value="InterPro"/>
</dbReference>
<dbReference type="GO" id="GO:0005344">
    <property type="term" value="F:oxygen carrier activity"/>
    <property type="evidence" value="ECO:0007669"/>
    <property type="project" value="UniProtKB-KW"/>
</dbReference>
<dbReference type="GO" id="GO:0004601">
    <property type="term" value="F:peroxidase activity"/>
    <property type="evidence" value="ECO:0007669"/>
    <property type="project" value="TreeGrafter"/>
</dbReference>
<dbReference type="GO" id="GO:0042744">
    <property type="term" value="P:hydrogen peroxide catabolic process"/>
    <property type="evidence" value="ECO:0007669"/>
    <property type="project" value="TreeGrafter"/>
</dbReference>
<dbReference type="CDD" id="cd08927">
    <property type="entry name" value="Hb-alpha-like"/>
    <property type="match status" value="1"/>
</dbReference>
<dbReference type="FunFam" id="1.10.490.10:FF:000002">
    <property type="entry name" value="Hemoglobin subunit alpha"/>
    <property type="match status" value="1"/>
</dbReference>
<dbReference type="Gene3D" id="1.10.490.10">
    <property type="entry name" value="Globins"/>
    <property type="match status" value="1"/>
</dbReference>
<dbReference type="InterPro" id="IPR000971">
    <property type="entry name" value="Globin"/>
</dbReference>
<dbReference type="InterPro" id="IPR009050">
    <property type="entry name" value="Globin-like_sf"/>
</dbReference>
<dbReference type="InterPro" id="IPR012292">
    <property type="entry name" value="Globin/Proto"/>
</dbReference>
<dbReference type="InterPro" id="IPR002338">
    <property type="entry name" value="Hemoglobin_a-typ"/>
</dbReference>
<dbReference type="InterPro" id="IPR050056">
    <property type="entry name" value="Hemoglobin_oxygen_transport"/>
</dbReference>
<dbReference type="PANTHER" id="PTHR11442">
    <property type="entry name" value="HEMOGLOBIN FAMILY MEMBER"/>
    <property type="match status" value="1"/>
</dbReference>
<dbReference type="PANTHER" id="PTHR11442:SF41">
    <property type="entry name" value="HEMOGLOBIN SUBUNIT ZETA"/>
    <property type="match status" value="1"/>
</dbReference>
<dbReference type="Pfam" id="PF00042">
    <property type="entry name" value="Globin"/>
    <property type="match status" value="1"/>
</dbReference>
<dbReference type="PRINTS" id="PR00612">
    <property type="entry name" value="ALPHAHAEM"/>
</dbReference>
<dbReference type="SUPFAM" id="SSF46458">
    <property type="entry name" value="Globin-like"/>
    <property type="match status" value="1"/>
</dbReference>
<dbReference type="PROSITE" id="PS01033">
    <property type="entry name" value="GLOBIN"/>
    <property type="match status" value="1"/>
</dbReference>
<reference key="1">
    <citation type="submission" date="2001-09" db="EMBL/GenBank/DDBJ databases">
        <title>Alpha D-globin gene of hemoglobin D from the Aldabra giant tortoises, Geochelone gigantea.</title>
        <authorList>
            <person name="Shishikura F."/>
        </authorList>
    </citation>
    <scope>NUCLEOTIDE SEQUENCE [GENOMIC DNA]</scope>
</reference>
<reference evidence="3" key="2">
    <citation type="journal article" date="2001" name="Zool. Sci.">
        <title>The amino acid sequences of the alpha- and beta-globin chains of hemoglobin from the Aldabra giant tortoises, Geochelone gigantea.</title>
        <authorList>
            <person name="Shishikura F."/>
            <person name="Takami K."/>
        </authorList>
    </citation>
    <scope>PROTEIN SEQUENCE OF 1-20</scope>
    <source>
        <tissue>Erythrocyte</tissue>
    </source>
</reference>